<proteinExistence type="inferred from homology"/>
<name>COAE_LEGPL</name>
<keyword id="KW-0067">ATP-binding</keyword>
<keyword id="KW-0173">Coenzyme A biosynthesis</keyword>
<keyword id="KW-0963">Cytoplasm</keyword>
<keyword id="KW-0418">Kinase</keyword>
<keyword id="KW-0547">Nucleotide-binding</keyword>
<keyword id="KW-0808">Transferase</keyword>
<reference key="1">
    <citation type="journal article" date="2004" name="Nat. Genet.">
        <title>Evidence in the Legionella pneumophila genome for exploitation of host cell functions and high genome plasticity.</title>
        <authorList>
            <person name="Cazalet C."/>
            <person name="Rusniok C."/>
            <person name="Brueggemann H."/>
            <person name="Zidane N."/>
            <person name="Magnier A."/>
            <person name="Ma L."/>
            <person name="Tichit M."/>
            <person name="Jarraud S."/>
            <person name="Bouchier C."/>
            <person name="Vandenesch F."/>
            <person name="Kunst F."/>
            <person name="Etienne J."/>
            <person name="Glaser P."/>
            <person name="Buchrieser C."/>
        </authorList>
    </citation>
    <scope>NUCLEOTIDE SEQUENCE [LARGE SCALE GENOMIC DNA]</scope>
    <source>
        <strain>Lens</strain>
    </source>
</reference>
<accession>Q5WW92</accession>
<dbReference type="EC" id="2.7.1.24" evidence="1"/>
<dbReference type="EMBL" id="CR628337">
    <property type="protein sequence ID" value="CAH15801.1"/>
    <property type="molecule type" value="Genomic_DNA"/>
</dbReference>
<dbReference type="RefSeq" id="WP_011215598.1">
    <property type="nucleotide sequence ID" value="NC_006369.1"/>
</dbReference>
<dbReference type="SMR" id="Q5WW92"/>
<dbReference type="KEGG" id="lpf:lpl1561"/>
<dbReference type="LegioList" id="lpl1561"/>
<dbReference type="HOGENOM" id="CLU_057180_1_2_6"/>
<dbReference type="UniPathway" id="UPA00241">
    <property type="reaction ID" value="UER00356"/>
</dbReference>
<dbReference type="Proteomes" id="UP000002517">
    <property type="component" value="Chromosome"/>
</dbReference>
<dbReference type="GO" id="GO:0005737">
    <property type="term" value="C:cytoplasm"/>
    <property type="evidence" value="ECO:0007669"/>
    <property type="project" value="UniProtKB-SubCell"/>
</dbReference>
<dbReference type="GO" id="GO:0005524">
    <property type="term" value="F:ATP binding"/>
    <property type="evidence" value="ECO:0007669"/>
    <property type="project" value="UniProtKB-UniRule"/>
</dbReference>
<dbReference type="GO" id="GO:0004140">
    <property type="term" value="F:dephospho-CoA kinase activity"/>
    <property type="evidence" value="ECO:0007669"/>
    <property type="project" value="UniProtKB-UniRule"/>
</dbReference>
<dbReference type="GO" id="GO:0015937">
    <property type="term" value="P:coenzyme A biosynthetic process"/>
    <property type="evidence" value="ECO:0007669"/>
    <property type="project" value="UniProtKB-UniRule"/>
</dbReference>
<dbReference type="CDD" id="cd02022">
    <property type="entry name" value="DPCK"/>
    <property type="match status" value="1"/>
</dbReference>
<dbReference type="Gene3D" id="3.40.50.300">
    <property type="entry name" value="P-loop containing nucleotide triphosphate hydrolases"/>
    <property type="match status" value="1"/>
</dbReference>
<dbReference type="HAMAP" id="MF_00376">
    <property type="entry name" value="Dephospho_CoA_kinase"/>
    <property type="match status" value="1"/>
</dbReference>
<dbReference type="InterPro" id="IPR001977">
    <property type="entry name" value="Depp_CoAkinase"/>
</dbReference>
<dbReference type="InterPro" id="IPR027417">
    <property type="entry name" value="P-loop_NTPase"/>
</dbReference>
<dbReference type="NCBIfam" id="TIGR00152">
    <property type="entry name" value="dephospho-CoA kinase"/>
    <property type="match status" value="1"/>
</dbReference>
<dbReference type="PANTHER" id="PTHR10695:SF46">
    <property type="entry name" value="BIFUNCTIONAL COENZYME A SYNTHASE-RELATED"/>
    <property type="match status" value="1"/>
</dbReference>
<dbReference type="PANTHER" id="PTHR10695">
    <property type="entry name" value="DEPHOSPHO-COA KINASE-RELATED"/>
    <property type="match status" value="1"/>
</dbReference>
<dbReference type="Pfam" id="PF01121">
    <property type="entry name" value="CoaE"/>
    <property type="match status" value="1"/>
</dbReference>
<dbReference type="SUPFAM" id="SSF52540">
    <property type="entry name" value="P-loop containing nucleoside triphosphate hydrolases"/>
    <property type="match status" value="1"/>
</dbReference>
<dbReference type="PROSITE" id="PS51219">
    <property type="entry name" value="DPCK"/>
    <property type="match status" value="1"/>
</dbReference>
<protein>
    <recommendedName>
        <fullName evidence="1">Dephospho-CoA kinase</fullName>
        <ecNumber evidence="1">2.7.1.24</ecNumber>
    </recommendedName>
    <alternativeName>
        <fullName evidence="1">Dephosphocoenzyme A kinase</fullName>
    </alternativeName>
</protein>
<gene>
    <name evidence="1" type="primary">coaE</name>
    <name type="ordered locus">lpl1561</name>
</gene>
<organism>
    <name type="scientific">Legionella pneumophila (strain Lens)</name>
    <dbReference type="NCBI Taxonomy" id="297245"/>
    <lineage>
        <taxon>Bacteria</taxon>
        <taxon>Pseudomonadati</taxon>
        <taxon>Pseudomonadota</taxon>
        <taxon>Gammaproteobacteria</taxon>
        <taxon>Legionellales</taxon>
        <taxon>Legionellaceae</taxon>
        <taxon>Legionella</taxon>
    </lineage>
</organism>
<sequence length="201" mass="22876">MVYSVGLTGNIASGKSTVAEFFSELGINVIYADKIAKELTSKDTPCYQDIILHFGSSVVLNNGELDRKHIRDIIFSNSNERLWLESLLHPVIRKKIEEQLIVCTSPYCLIEIPLLFNKHHYPYLQKVLLVIAPLESQLDRIVKRDHCTKKQALAILATQPNLEQRLEAADDVLINESGLSELKAKVNKLHQKYLREAKIKQ</sequence>
<comment type="function">
    <text evidence="1">Catalyzes the phosphorylation of the 3'-hydroxyl group of dephosphocoenzyme A to form coenzyme A.</text>
</comment>
<comment type="catalytic activity">
    <reaction evidence="1">
        <text>3'-dephospho-CoA + ATP = ADP + CoA + H(+)</text>
        <dbReference type="Rhea" id="RHEA:18245"/>
        <dbReference type="ChEBI" id="CHEBI:15378"/>
        <dbReference type="ChEBI" id="CHEBI:30616"/>
        <dbReference type="ChEBI" id="CHEBI:57287"/>
        <dbReference type="ChEBI" id="CHEBI:57328"/>
        <dbReference type="ChEBI" id="CHEBI:456216"/>
        <dbReference type="EC" id="2.7.1.24"/>
    </reaction>
</comment>
<comment type="pathway">
    <text evidence="1">Cofactor biosynthesis; coenzyme A biosynthesis; CoA from (R)-pantothenate: step 5/5.</text>
</comment>
<comment type="subcellular location">
    <subcellularLocation>
        <location evidence="1">Cytoplasm</location>
    </subcellularLocation>
</comment>
<comment type="similarity">
    <text evidence="1">Belongs to the CoaE family.</text>
</comment>
<evidence type="ECO:0000255" key="1">
    <source>
        <dbReference type="HAMAP-Rule" id="MF_00376"/>
    </source>
</evidence>
<feature type="chain" id="PRO_0000243300" description="Dephospho-CoA kinase">
    <location>
        <begin position="1"/>
        <end position="201"/>
    </location>
</feature>
<feature type="domain" description="DPCK" evidence="1">
    <location>
        <begin position="4"/>
        <end position="201"/>
    </location>
</feature>
<feature type="binding site" evidence="1">
    <location>
        <begin position="12"/>
        <end position="17"/>
    </location>
    <ligand>
        <name>ATP</name>
        <dbReference type="ChEBI" id="CHEBI:30616"/>
    </ligand>
</feature>